<organism>
    <name type="scientific">Haloquadratum walsbyi (strain DSM 16790 / HBSQ001)</name>
    <dbReference type="NCBI Taxonomy" id="362976"/>
    <lineage>
        <taxon>Archaea</taxon>
        <taxon>Methanobacteriati</taxon>
        <taxon>Methanobacteriota</taxon>
        <taxon>Stenosarchaea group</taxon>
        <taxon>Halobacteria</taxon>
        <taxon>Halobacteriales</taxon>
        <taxon>Haloferacaceae</taxon>
        <taxon>Haloquadratum</taxon>
    </lineage>
</organism>
<sequence>MAEFKVVVSDETGHTRQFEVDEQDANRFLGRNLGNEVDGNAVGLDGATLELTGGSDDAGRPMREDVSGSDLKELLLEGGVGYEPTRDGERKRITVRGRQVSDETAQVNAAVVGETPIAVLLGEEEPEDADDDGDSDVDADEATDTDAGSEEDNDDDIADAE</sequence>
<dbReference type="EMBL" id="AM180088">
    <property type="protein sequence ID" value="CAJ51200.1"/>
    <property type="molecule type" value="Genomic_DNA"/>
</dbReference>
<dbReference type="SMR" id="Q18DP5"/>
<dbReference type="STRING" id="362976.HQ_1070A"/>
<dbReference type="KEGG" id="hwa:HQ_1070A"/>
<dbReference type="eggNOG" id="arCOG01946">
    <property type="taxonomic scope" value="Archaea"/>
</dbReference>
<dbReference type="HOGENOM" id="CLU_109671_0_0_2"/>
<dbReference type="Proteomes" id="UP000001975">
    <property type="component" value="Chromosome"/>
</dbReference>
<dbReference type="GO" id="GO:1990904">
    <property type="term" value="C:ribonucleoprotein complex"/>
    <property type="evidence" value="ECO:0007669"/>
    <property type="project" value="UniProtKB-KW"/>
</dbReference>
<dbReference type="GO" id="GO:0005840">
    <property type="term" value="C:ribosome"/>
    <property type="evidence" value="ECO:0007669"/>
    <property type="project" value="UniProtKB-KW"/>
</dbReference>
<dbReference type="GO" id="GO:0003735">
    <property type="term" value="F:structural constituent of ribosome"/>
    <property type="evidence" value="ECO:0007669"/>
    <property type="project" value="InterPro"/>
</dbReference>
<dbReference type="GO" id="GO:0006412">
    <property type="term" value="P:translation"/>
    <property type="evidence" value="ECO:0007669"/>
    <property type="project" value="UniProtKB-UniRule"/>
</dbReference>
<dbReference type="HAMAP" id="MF_00512">
    <property type="entry name" value="Ribosomal_eS6"/>
    <property type="match status" value="1"/>
</dbReference>
<dbReference type="InterPro" id="IPR001377">
    <property type="entry name" value="Ribosomal_eS6"/>
</dbReference>
<dbReference type="InterPro" id="IPR020924">
    <property type="entry name" value="Ribosomal_eS6_arc"/>
</dbReference>
<dbReference type="InterPro" id="IPR018282">
    <property type="entry name" value="Ribosomal_eS6_CS"/>
</dbReference>
<dbReference type="NCBIfam" id="NF003294">
    <property type="entry name" value="PRK04290.1-3"/>
    <property type="match status" value="1"/>
</dbReference>
<dbReference type="PANTHER" id="PTHR11502">
    <property type="entry name" value="40S RIBOSOMAL PROTEIN S6"/>
    <property type="match status" value="1"/>
</dbReference>
<dbReference type="Pfam" id="PF01092">
    <property type="entry name" value="Ribosomal_S6e"/>
    <property type="match status" value="1"/>
</dbReference>
<dbReference type="SMART" id="SM01405">
    <property type="entry name" value="Ribosomal_S6e"/>
    <property type="match status" value="1"/>
</dbReference>
<dbReference type="PROSITE" id="PS00578">
    <property type="entry name" value="RIBOSOMAL_S6E"/>
    <property type="match status" value="1"/>
</dbReference>
<accession>Q18DP5</accession>
<reference key="1">
    <citation type="journal article" date="2006" name="BMC Genomics">
        <title>The genome of the square archaeon Haloquadratum walsbyi: life at the limits of water activity.</title>
        <authorList>
            <person name="Bolhuis H."/>
            <person name="Palm P."/>
            <person name="Wende A."/>
            <person name="Falb M."/>
            <person name="Rampp M."/>
            <person name="Rodriguez-Valera F."/>
            <person name="Pfeiffer F."/>
            <person name="Oesterhelt D."/>
        </authorList>
    </citation>
    <scope>NUCLEOTIDE SEQUENCE [LARGE SCALE GENOMIC DNA]</scope>
    <source>
        <strain>DSM 16790 / HBSQ001</strain>
    </source>
</reference>
<name>RS6E_HALWD</name>
<proteinExistence type="inferred from homology"/>
<evidence type="ECO:0000255" key="1">
    <source>
        <dbReference type="HAMAP-Rule" id="MF_00512"/>
    </source>
</evidence>
<evidence type="ECO:0000256" key="2">
    <source>
        <dbReference type="SAM" id="MobiDB-lite"/>
    </source>
</evidence>
<evidence type="ECO:0000305" key="3"/>
<comment type="similarity">
    <text evidence="1">Belongs to the eukaryotic ribosomal protein eS6 family.</text>
</comment>
<feature type="chain" id="PRO_0000258621" description="Small ribosomal subunit protein eS6">
    <location>
        <begin position="1"/>
        <end position="161"/>
    </location>
</feature>
<feature type="region of interest" description="Disordered" evidence="2">
    <location>
        <begin position="119"/>
        <end position="161"/>
    </location>
</feature>
<feature type="compositionally biased region" description="Acidic residues" evidence="2">
    <location>
        <begin position="122"/>
        <end position="161"/>
    </location>
</feature>
<keyword id="KW-1185">Reference proteome</keyword>
<keyword id="KW-0687">Ribonucleoprotein</keyword>
<keyword id="KW-0689">Ribosomal protein</keyword>
<protein>
    <recommendedName>
        <fullName evidence="1">Small ribosomal subunit protein eS6</fullName>
    </recommendedName>
    <alternativeName>
        <fullName evidence="3">30S ribosomal protein S6e</fullName>
    </alternativeName>
</protein>
<gene>
    <name evidence="1" type="primary">rps6e</name>
    <name type="ordered locus">HQ_1070A</name>
</gene>